<proteinExistence type="inferred from homology"/>
<organism>
    <name type="scientific">Fusobacterium nucleatum subsp. nucleatum (strain ATCC 25586 / DSM 15643 / BCRC 10681 / CIP 101130 / JCM 8532 / KCTC 2640 / LMG 13131 / VPI 4355)</name>
    <dbReference type="NCBI Taxonomy" id="190304"/>
    <lineage>
        <taxon>Bacteria</taxon>
        <taxon>Fusobacteriati</taxon>
        <taxon>Fusobacteriota</taxon>
        <taxon>Fusobacteriia</taxon>
        <taxon>Fusobacteriales</taxon>
        <taxon>Fusobacteriaceae</taxon>
        <taxon>Fusobacterium</taxon>
    </lineage>
</organism>
<evidence type="ECO:0000255" key="1">
    <source>
        <dbReference type="HAMAP-Rule" id="MF_00339"/>
    </source>
</evidence>
<evidence type="ECO:0000305" key="2"/>
<protein>
    <recommendedName>
        <fullName evidence="1">ATP-dependent 6-phosphofructokinase</fullName>
        <shortName evidence="1">ATP-PFK</shortName>
        <shortName evidence="1">Phosphofructokinase</shortName>
        <ecNumber evidence="1">2.7.1.11</ecNumber>
    </recommendedName>
    <alternativeName>
        <fullName evidence="1">Phosphohexokinase</fullName>
    </alternativeName>
</protein>
<accession>Q8RG98</accession>
<dbReference type="EC" id="2.7.1.11" evidence="1"/>
<dbReference type="EMBL" id="AE009951">
    <property type="protein sequence ID" value="AAL94613.1"/>
    <property type="status" value="ALT_INIT"/>
    <property type="molecule type" value="Genomic_DNA"/>
</dbReference>
<dbReference type="RefSeq" id="NP_603314.1">
    <property type="nucleotide sequence ID" value="NC_003454.1"/>
</dbReference>
<dbReference type="RefSeq" id="WP_023041561.1">
    <property type="nucleotide sequence ID" value="NZ_OZ209243.1"/>
</dbReference>
<dbReference type="SMR" id="Q8RG98"/>
<dbReference type="FunCoup" id="Q8RG98">
    <property type="interactions" value="256"/>
</dbReference>
<dbReference type="STRING" id="190304.FN0410"/>
<dbReference type="PaxDb" id="190304-FN0410"/>
<dbReference type="EnsemblBacteria" id="AAL94613">
    <property type="protein sequence ID" value="AAL94613"/>
    <property type="gene ID" value="FN0410"/>
</dbReference>
<dbReference type="GeneID" id="79783416"/>
<dbReference type="KEGG" id="fnu:FN0410"/>
<dbReference type="PATRIC" id="fig|190304.8.peg.985"/>
<dbReference type="eggNOG" id="COG0205">
    <property type="taxonomic scope" value="Bacteria"/>
</dbReference>
<dbReference type="HOGENOM" id="CLU_020655_0_1_0"/>
<dbReference type="InParanoid" id="Q8RG98"/>
<dbReference type="UniPathway" id="UPA00109">
    <property type="reaction ID" value="UER00182"/>
</dbReference>
<dbReference type="Proteomes" id="UP000002521">
    <property type="component" value="Chromosome"/>
</dbReference>
<dbReference type="GO" id="GO:0005945">
    <property type="term" value="C:6-phosphofructokinase complex"/>
    <property type="evidence" value="ECO:0000318"/>
    <property type="project" value="GO_Central"/>
</dbReference>
<dbReference type="GO" id="GO:0003872">
    <property type="term" value="F:6-phosphofructokinase activity"/>
    <property type="evidence" value="ECO:0000318"/>
    <property type="project" value="GO_Central"/>
</dbReference>
<dbReference type="GO" id="GO:0005524">
    <property type="term" value="F:ATP binding"/>
    <property type="evidence" value="ECO:0007669"/>
    <property type="project" value="UniProtKB-KW"/>
</dbReference>
<dbReference type="GO" id="GO:0070095">
    <property type="term" value="F:fructose-6-phosphate binding"/>
    <property type="evidence" value="ECO:0000318"/>
    <property type="project" value="GO_Central"/>
</dbReference>
<dbReference type="GO" id="GO:0046872">
    <property type="term" value="F:metal ion binding"/>
    <property type="evidence" value="ECO:0007669"/>
    <property type="project" value="UniProtKB-KW"/>
</dbReference>
<dbReference type="GO" id="GO:0061621">
    <property type="term" value="P:canonical glycolysis"/>
    <property type="evidence" value="ECO:0000318"/>
    <property type="project" value="GO_Central"/>
</dbReference>
<dbReference type="GO" id="GO:0030388">
    <property type="term" value="P:fructose 1,6-bisphosphate metabolic process"/>
    <property type="evidence" value="ECO:0000318"/>
    <property type="project" value="GO_Central"/>
</dbReference>
<dbReference type="GO" id="GO:0006002">
    <property type="term" value="P:fructose 6-phosphate metabolic process"/>
    <property type="evidence" value="ECO:0000318"/>
    <property type="project" value="GO_Central"/>
</dbReference>
<dbReference type="FunFam" id="3.40.50.450:FF:000001">
    <property type="entry name" value="ATP-dependent 6-phosphofructokinase"/>
    <property type="match status" value="1"/>
</dbReference>
<dbReference type="FunFam" id="3.40.50.460:FF:000002">
    <property type="entry name" value="ATP-dependent 6-phosphofructokinase"/>
    <property type="match status" value="1"/>
</dbReference>
<dbReference type="Gene3D" id="3.40.50.450">
    <property type="match status" value="1"/>
</dbReference>
<dbReference type="Gene3D" id="3.40.50.460">
    <property type="entry name" value="Phosphofructokinase domain"/>
    <property type="match status" value="1"/>
</dbReference>
<dbReference type="HAMAP" id="MF_00339">
    <property type="entry name" value="Phosphofructokinase_I_B1"/>
    <property type="match status" value="1"/>
</dbReference>
<dbReference type="InterPro" id="IPR022953">
    <property type="entry name" value="ATP_PFK"/>
</dbReference>
<dbReference type="InterPro" id="IPR012003">
    <property type="entry name" value="ATP_PFK_prok-type"/>
</dbReference>
<dbReference type="InterPro" id="IPR012828">
    <property type="entry name" value="PFKA_ATP_prok"/>
</dbReference>
<dbReference type="InterPro" id="IPR015912">
    <property type="entry name" value="Phosphofructokinase_CS"/>
</dbReference>
<dbReference type="InterPro" id="IPR000023">
    <property type="entry name" value="Phosphofructokinase_dom"/>
</dbReference>
<dbReference type="InterPro" id="IPR035966">
    <property type="entry name" value="PKF_sf"/>
</dbReference>
<dbReference type="NCBIfam" id="TIGR02482">
    <property type="entry name" value="PFKA_ATP"/>
    <property type="match status" value="1"/>
</dbReference>
<dbReference type="NCBIfam" id="NF002872">
    <property type="entry name" value="PRK03202.1"/>
    <property type="match status" value="1"/>
</dbReference>
<dbReference type="PANTHER" id="PTHR13697:SF4">
    <property type="entry name" value="ATP-DEPENDENT 6-PHOSPHOFRUCTOKINASE"/>
    <property type="match status" value="1"/>
</dbReference>
<dbReference type="PANTHER" id="PTHR13697">
    <property type="entry name" value="PHOSPHOFRUCTOKINASE"/>
    <property type="match status" value="1"/>
</dbReference>
<dbReference type="Pfam" id="PF00365">
    <property type="entry name" value="PFK"/>
    <property type="match status" value="1"/>
</dbReference>
<dbReference type="PIRSF" id="PIRSF000532">
    <property type="entry name" value="ATP_PFK_prok"/>
    <property type="match status" value="1"/>
</dbReference>
<dbReference type="PRINTS" id="PR00476">
    <property type="entry name" value="PHFRCTKINASE"/>
</dbReference>
<dbReference type="SUPFAM" id="SSF53784">
    <property type="entry name" value="Phosphofructokinase"/>
    <property type="match status" value="1"/>
</dbReference>
<dbReference type="PROSITE" id="PS00433">
    <property type="entry name" value="PHOSPHOFRUCTOKINASE"/>
    <property type="match status" value="1"/>
</dbReference>
<reference key="1">
    <citation type="journal article" date="2002" name="J. Bacteriol.">
        <title>Genome sequence and analysis of the oral bacterium Fusobacterium nucleatum strain ATCC 25586.</title>
        <authorList>
            <person name="Kapatral V."/>
            <person name="Anderson I."/>
            <person name="Ivanova N."/>
            <person name="Reznik G."/>
            <person name="Los T."/>
            <person name="Lykidis A."/>
            <person name="Bhattacharyya A."/>
            <person name="Bartman A."/>
            <person name="Gardner W."/>
            <person name="Grechkin G."/>
            <person name="Zhu L."/>
            <person name="Vasieva O."/>
            <person name="Chu L."/>
            <person name="Kogan Y."/>
            <person name="Chaga O."/>
            <person name="Goltsman E."/>
            <person name="Bernal A."/>
            <person name="Larsen N."/>
            <person name="D'Souza M."/>
            <person name="Walunas T."/>
            <person name="Pusch G."/>
            <person name="Haselkorn R."/>
            <person name="Fonstein M."/>
            <person name="Kyrpides N.C."/>
            <person name="Overbeek R."/>
        </authorList>
    </citation>
    <scope>NUCLEOTIDE SEQUENCE [LARGE SCALE GENOMIC DNA]</scope>
    <source>
        <strain>ATCC 25586 / DSM 15643 / BCRC 10681 / CIP 101130 / JCM 8532 / KCTC 2640 / LMG 13131 / VPI 4355</strain>
    </source>
</reference>
<sequence>MEKKLAILTSGGDAPGMNAAIRATAKIAEYYGFEVYGIRRGYLGMLNDEIFPMTGRFVSGIIDKGGTVLLTARSEEFKEARFREIAANNLKKKGINYLVVIGGDGSYRGANLLYKEHGIKVVGIPGTIDNDICGTDFTLGFDTCLNTILDAMSKIRDTATSHERTILIQVMGRRAGDLALHACIAGGGDGIMIPEMDNPIEMLALQLKERRKNGKLHDIVLVAEGVGNVLDIEEKLKGHINSEIRSVVLGHIQRGGTPSGFDRVLASRMAAKAVEVLNKGEAGVMVGIEKNEMVTHPLEEACSVDKRKSIEKDYELALLLSK</sequence>
<keyword id="KW-0021">Allosteric enzyme</keyword>
<keyword id="KW-0067">ATP-binding</keyword>
<keyword id="KW-0963">Cytoplasm</keyword>
<keyword id="KW-0324">Glycolysis</keyword>
<keyword id="KW-0418">Kinase</keyword>
<keyword id="KW-0460">Magnesium</keyword>
<keyword id="KW-0479">Metal-binding</keyword>
<keyword id="KW-0547">Nucleotide-binding</keyword>
<keyword id="KW-1185">Reference proteome</keyword>
<keyword id="KW-0808">Transferase</keyword>
<comment type="function">
    <text evidence="1">Catalyzes the phosphorylation of D-fructose 6-phosphate to fructose 1,6-bisphosphate by ATP, the first committing step of glycolysis.</text>
</comment>
<comment type="catalytic activity">
    <reaction evidence="1">
        <text>beta-D-fructose 6-phosphate + ATP = beta-D-fructose 1,6-bisphosphate + ADP + H(+)</text>
        <dbReference type="Rhea" id="RHEA:16109"/>
        <dbReference type="ChEBI" id="CHEBI:15378"/>
        <dbReference type="ChEBI" id="CHEBI:30616"/>
        <dbReference type="ChEBI" id="CHEBI:32966"/>
        <dbReference type="ChEBI" id="CHEBI:57634"/>
        <dbReference type="ChEBI" id="CHEBI:456216"/>
        <dbReference type="EC" id="2.7.1.11"/>
    </reaction>
</comment>
<comment type="cofactor">
    <cofactor evidence="1">
        <name>Mg(2+)</name>
        <dbReference type="ChEBI" id="CHEBI:18420"/>
    </cofactor>
</comment>
<comment type="activity regulation">
    <text evidence="1">Allosterically activated by ADP and other diphosphonucleosides, and allosterically inhibited by phosphoenolpyruvate.</text>
</comment>
<comment type="pathway">
    <text evidence="1">Carbohydrate degradation; glycolysis; D-glyceraldehyde 3-phosphate and glycerone phosphate from D-glucose: step 3/4.</text>
</comment>
<comment type="subunit">
    <text evidence="1">Homotetramer.</text>
</comment>
<comment type="subcellular location">
    <subcellularLocation>
        <location evidence="1">Cytoplasm</location>
    </subcellularLocation>
</comment>
<comment type="similarity">
    <text evidence="1">Belongs to the phosphofructokinase type A (PFKA) family. ATP-dependent PFK group I subfamily. Prokaryotic clade 'B1' sub-subfamily.</text>
</comment>
<comment type="sequence caution" evidence="2">
    <conflict type="erroneous initiation">
        <sequence resource="EMBL-CDS" id="AAL94613"/>
    </conflict>
</comment>
<gene>
    <name evidence="1" type="primary">pfkA</name>
    <name type="ordered locus">FN0410</name>
</gene>
<name>PFKA_FUSNN</name>
<feature type="chain" id="PRO_0000111954" description="ATP-dependent 6-phosphofructokinase">
    <location>
        <begin position="1"/>
        <end position="322"/>
    </location>
</feature>
<feature type="active site" description="Proton acceptor" evidence="1">
    <location>
        <position position="129"/>
    </location>
</feature>
<feature type="binding site" evidence="1">
    <location>
        <position position="12"/>
    </location>
    <ligand>
        <name>ATP</name>
        <dbReference type="ChEBI" id="CHEBI:30616"/>
    </ligand>
</feature>
<feature type="binding site" evidence="1">
    <location>
        <begin position="22"/>
        <end position="26"/>
    </location>
    <ligand>
        <name>ADP</name>
        <dbReference type="ChEBI" id="CHEBI:456216"/>
        <note>allosteric activator; ligand shared between dimeric partners</note>
    </ligand>
</feature>
<feature type="binding site" evidence="1">
    <location>
        <begin position="73"/>
        <end position="74"/>
    </location>
    <ligand>
        <name>ATP</name>
        <dbReference type="ChEBI" id="CHEBI:30616"/>
    </ligand>
</feature>
<feature type="binding site" evidence="1">
    <location>
        <begin position="103"/>
        <end position="106"/>
    </location>
    <ligand>
        <name>ATP</name>
        <dbReference type="ChEBI" id="CHEBI:30616"/>
    </ligand>
</feature>
<feature type="binding site" evidence="1">
    <location>
        <position position="104"/>
    </location>
    <ligand>
        <name>Mg(2+)</name>
        <dbReference type="ChEBI" id="CHEBI:18420"/>
        <note>catalytic</note>
    </ligand>
</feature>
<feature type="binding site" description="in other chain" evidence="1">
    <location>
        <begin position="127"/>
        <end position="129"/>
    </location>
    <ligand>
        <name>substrate</name>
        <note>ligand shared between dimeric partners</note>
    </ligand>
</feature>
<feature type="binding site" description="in other chain" evidence="1">
    <location>
        <position position="156"/>
    </location>
    <ligand>
        <name>ADP</name>
        <dbReference type="ChEBI" id="CHEBI:456216"/>
        <note>allosteric activator; ligand shared between dimeric partners</note>
    </ligand>
</feature>
<feature type="binding site" evidence="1">
    <location>
        <position position="164"/>
    </location>
    <ligand>
        <name>substrate</name>
        <note>ligand shared between dimeric partners</note>
    </ligand>
</feature>
<feature type="binding site" description="in other chain" evidence="1">
    <location>
        <begin position="171"/>
        <end position="173"/>
    </location>
    <ligand>
        <name>substrate</name>
        <note>ligand shared between dimeric partners</note>
    </ligand>
</feature>
<feature type="binding site" description="in other chain" evidence="1">
    <location>
        <begin position="187"/>
        <end position="189"/>
    </location>
    <ligand>
        <name>ADP</name>
        <dbReference type="ChEBI" id="CHEBI:456216"/>
        <note>allosteric activator; ligand shared between dimeric partners</note>
    </ligand>
</feature>
<feature type="binding site" description="in other chain" evidence="1">
    <location>
        <begin position="215"/>
        <end position="217"/>
    </location>
    <ligand>
        <name>ADP</name>
        <dbReference type="ChEBI" id="CHEBI:456216"/>
        <note>allosteric activator; ligand shared between dimeric partners</note>
    </ligand>
</feature>
<feature type="binding site" description="in other chain" evidence="1">
    <location>
        <position position="224"/>
    </location>
    <ligand>
        <name>substrate</name>
        <note>ligand shared between dimeric partners</note>
    </ligand>
</feature>
<feature type="binding site" evidence="1">
    <location>
        <position position="245"/>
    </location>
    <ligand>
        <name>substrate</name>
        <note>ligand shared between dimeric partners</note>
    </ligand>
</feature>
<feature type="binding site" description="in other chain" evidence="1">
    <location>
        <begin position="251"/>
        <end position="254"/>
    </location>
    <ligand>
        <name>substrate</name>
        <note>ligand shared between dimeric partners</note>
    </ligand>
</feature>